<name>T53I2_MOUSE</name>
<keyword id="KW-0010">Activator</keyword>
<keyword id="KW-0025">Alternative splicing</keyword>
<keyword id="KW-0072">Autophagy</keyword>
<keyword id="KW-0963">Cytoplasm</keyword>
<keyword id="KW-0968">Cytoplasmic vesicle</keyword>
<keyword id="KW-0539">Nucleus</keyword>
<keyword id="KW-0597">Phosphoprotein</keyword>
<keyword id="KW-1185">Reference proteome</keyword>
<keyword id="KW-0804">Transcription</keyword>
<keyword id="KW-0805">Transcription regulation</keyword>
<protein>
    <recommendedName>
        <fullName>Tumor protein p53-inducible nuclear protein 2</fullName>
    </recommendedName>
    <alternativeName>
        <fullName>Diabetes and obesity-regulated protein</fullName>
    </alternativeName>
</protein>
<evidence type="ECO:0000250" key="1"/>
<evidence type="ECO:0000250" key="2">
    <source>
        <dbReference type="UniProtKB" id="Q8IXH6"/>
    </source>
</evidence>
<evidence type="ECO:0000256" key="3">
    <source>
        <dbReference type="SAM" id="MobiDB-lite"/>
    </source>
</evidence>
<evidence type="ECO:0000269" key="4">
    <source>
    </source>
</evidence>
<evidence type="ECO:0000303" key="5">
    <source>
    </source>
</evidence>
<evidence type="ECO:0000305" key="6"/>
<gene>
    <name type="primary">Tp53inp2</name>
    <name type="synonym">Dor</name>
    <name type="synonym">Trp53inp2</name>
</gene>
<proteinExistence type="evidence at transcript level"/>
<dbReference type="EMBL" id="AJ297793">
    <property type="protein sequence ID" value="CAC82594.1"/>
    <property type="molecule type" value="mRNA"/>
</dbReference>
<dbReference type="EMBL" id="AJ311669">
    <property type="protein sequence ID" value="CAC84145.1"/>
    <property type="molecule type" value="Genomic_DNA"/>
</dbReference>
<dbReference type="EMBL" id="AL845325">
    <property type="status" value="NOT_ANNOTATED_CDS"/>
    <property type="molecule type" value="Genomic_DNA"/>
</dbReference>
<dbReference type="EMBL" id="AK146589">
    <property type="protein sequence ID" value="BAE27284.1"/>
    <property type="molecule type" value="mRNA"/>
</dbReference>
<dbReference type="EMBL" id="AK170132">
    <property type="protein sequence ID" value="BAE41585.1"/>
    <property type="molecule type" value="mRNA"/>
</dbReference>
<dbReference type="EMBL" id="BC036958">
    <property type="protein sequence ID" value="AAH36958.2"/>
    <property type="molecule type" value="mRNA"/>
</dbReference>
<dbReference type="EMBL" id="BC043086">
    <property type="protein sequence ID" value="AAH43086.1"/>
    <property type="molecule type" value="mRNA"/>
</dbReference>
<dbReference type="CCDS" id="CCDS16947.1">
    <molecule id="Q8CFU8-1"/>
</dbReference>
<dbReference type="RefSeq" id="NP_835212.1">
    <molecule id="Q8CFU8-1"/>
    <property type="nucleotide sequence ID" value="NM_178111.3"/>
</dbReference>
<dbReference type="RefSeq" id="XP_006500176.1">
    <property type="nucleotide sequence ID" value="XM_006500113.3"/>
</dbReference>
<dbReference type="SMR" id="Q8CFU8"/>
<dbReference type="BioGRID" id="213017">
    <property type="interactions" value="5"/>
</dbReference>
<dbReference type="FunCoup" id="Q8CFU8">
    <property type="interactions" value="1939"/>
</dbReference>
<dbReference type="IntAct" id="Q8CFU8">
    <property type="interactions" value="3"/>
</dbReference>
<dbReference type="MINT" id="Q8CFU8"/>
<dbReference type="STRING" id="10090.ENSMUSP00000037627"/>
<dbReference type="iPTMnet" id="Q8CFU8"/>
<dbReference type="PhosphoSitePlus" id="Q8CFU8"/>
<dbReference type="PaxDb" id="10090-ENSMUSP00000037627"/>
<dbReference type="ProteomicsDB" id="254641">
    <molecule id="Q8CFU8-1"/>
</dbReference>
<dbReference type="ProteomicsDB" id="254642">
    <molecule id="Q8CFU8-2"/>
</dbReference>
<dbReference type="Pumba" id="Q8CFU8"/>
<dbReference type="Antibodypedia" id="43096">
    <property type="antibodies" value="181 antibodies from 20 providers"/>
</dbReference>
<dbReference type="Ensembl" id="ENSMUST00000043237.14">
    <molecule id="Q8CFU8-1"/>
    <property type="protein sequence ID" value="ENSMUSP00000037627.8"/>
    <property type="gene ID" value="ENSMUSG00000038375.16"/>
</dbReference>
<dbReference type="GeneID" id="68728"/>
<dbReference type="KEGG" id="mmu:68728"/>
<dbReference type="UCSC" id="uc008nkk.1">
    <molecule id="Q8CFU8-1"/>
    <property type="organism name" value="mouse"/>
</dbReference>
<dbReference type="AGR" id="MGI:1915978"/>
<dbReference type="CTD" id="68728"/>
<dbReference type="MGI" id="MGI:1915978">
    <property type="gene designation" value="Trp53inp2"/>
</dbReference>
<dbReference type="VEuPathDB" id="HostDB:ENSMUSG00000038375"/>
<dbReference type="eggNOG" id="ENOG502RZHB">
    <property type="taxonomic scope" value="Eukaryota"/>
</dbReference>
<dbReference type="GeneTree" id="ENSGT00530000063829"/>
<dbReference type="HOGENOM" id="CLU_091034_0_0_1"/>
<dbReference type="InParanoid" id="Q8CFU8"/>
<dbReference type="OMA" id="HQGSFIY"/>
<dbReference type="OrthoDB" id="10041339at2759"/>
<dbReference type="PhylomeDB" id="Q8CFU8"/>
<dbReference type="TreeFam" id="TF333017"/>
<dbReference type="BioGRID-ORCS" id="68728">
    <property type="hits" value="2 hits in 77 CRISPR screens"/>
</dbReference>
<dbReference type="ChiTaRS" id="Trp53inp2">
    <property type="organism name" value="mouse"/>
</dbReference>
<dbReference type="PRO" id="PR:Q8CFU8"/>
<dbReference type="Proteomes" id="UP000000589">
    <property type="component" value="Chromosome 2"/>
</dbReference>
<dbReference type="RNAct" id="Q8CFU8">
    <property type="molecule type" value="protein"/>
</dbReference>
<dbReference type="Bgee" id="ENSMUSG00000038375">
    <property type="expression patterns" value="Expressed in cardiac muscle of left ventricle and 268 other cell types or tissues"/>
</dbReference>
<dbReference type="ExpressionAtlas" id="Q8CFU8">
    <property type="expression patterns" value="baseline and differential"/>
</dbReference>
<dbReference type="GO" id="GO:0005776">
    <property type="term" value="C:autophagosome"/>
    <property type="evidence" value="ECO:0000250"/>
    <property type="project" value="UniProtKB"/>
</dbReference>
<dbReference type="GO" id="GO:0031410">
    <property type="term" value="C:cytoplasmic vesicle"/>
    <property type="evidence" value="ECO:0007669"/>
    <property type="project" value="UniProtKB-KW"/>
</dbReference>
<dbReference type="GO" id="GO:0005829">
    <property type="term" value="C:cytosol"/>
    <property type="evidence" value="ECO:0000250"/>
    <property type="project" value="UniProtKB"/>
</dbReference>
<dbReference type="GO" id="GO:0005634">
    <property type="term" value="C:nucleus"/>
    <property type="evidence" value="ECO:0000250"/>
    <property type="project" value="UniProtKB"/>
</dbReference>
<dbReference type="GO" id="GO:0016605">
    <property type="term" value="C:PML body"/>
    <property type="evidence" value="ECO:0007669"/>
    <property type="project" value="UniProtKB-SubCell"/>
</dbReference>
<dbReference type="GO" id="GO:0043130">
    <property type="term" value="F:ubiquitin binding"/>
    <property type="evidence" value="ECO:0000314"/>
    <property type="project" value="MGI"/>
</dbReference>
<dbReference type="GO" id="GO:0000045">
    <property type="term" value="P:autophagosome assembly"/>
    <property type="evidence" value="ECO:0000250"/>
    <property type="project" value="UniProtKB"/>
</dbReference>
<dbReference type="GO" id="GO:0016236">
    <property type="term" value="P:macroautophagy"/>
    <property type="evidence" value="ECO:0000315"/>
    <property type="project" value="MGI"/>
</dbReference>
<dbReference type="GO" id="GO:1903828">
    <property type="term" value="P:negative regulation of protein localization"/>
    <property type="evidence" value="ECO:0000314"/>
    <property type="project" value="MGI"/>
</dbReference>
<dbReference type="GO" id="GO:0001649">
    <property type="term" value="P:osteoblast differentiation"/>
    <property type="evidence" value="ECO:0000315"/>
    <property type="project" value="MGI"/>
</dbReference>
<dbReference type="GO" id="GO:0045893">
    <property type="term" value="P:positive regulation of DNA-templated transcription"/>
    <property type="evidence" value="ECO:0000250"/>
    <property type="project" value="UniProtKB"/>
</dbReference>
<dbReference type="GO" id="GO:0008104">
    <property type="term" value="P:protein localization"/>
    <property type="evidence" value="ECO:0000314"/>
    <property type="project" value="MGI"/>
</dbReference>
<dbReference type="GO" id="GO:0001894">
    <property type="term" value="P:tissue homeostasis"/>
    <property type="evidence" value="ECO:0000315"/>
    <property type="project" value="MGI"/>
</dbReference>
<dbReference type="GO" id="GO:0006511">
    <property type="term" value="P:ubiquitin-dependent protein catabolic process"/>
    <property type="evidence" value="ECO:0000314"/>
    <property type="project" value="MGI"/>
</dbReference>
<dbReference type="InterPro" id="IPR029431">
    <property type="entry name" value="TP53INP"/>
</dbReference>
<dbReference type="PANTHER" id="PTHR31671">
    <property type="entry name" value="DIABETES AND OBESITY REGULATED, ISOFORM G"/>
    <property type="match status" value="1"/>
</dbReference>
<dbReference type="PANTHER" id="PTHR31671:SF2">
    <property type="entry name" value="TUMOR PROTEIN P53-INDUCIBLE NUCLEAR PROTEIN 2"/>
    <property type="match status" value="1"/>
</dbReference>
<dbReference type="Pfam" id="PF14839">
    <property type="entry name" value="DOR"/>
    <property type="match status" value="1"/>
</dbReference>
<comment type="function">
    <text evidence="4">Dual regulator of transcription and autophagy. Positively regulates autophagy and is required for autophagosome formation and processing. May act as a scaffold protein that recruits MAP1LC3A, GABARAP and GABARAPL2 and brings them to the autophagosome membrane by interacting with VMP1 where, in cooperation with the BECN1-PI3-kinase class III complex, they trigger autophagosome development. Acts as a transcriptional activator of THRA.</text>
</comment>
<comment type="subunit">
    <text evidence="1">Interacts with VMP1, GABARAP, GABARAPL1, GABARAPL2, MAP1LC3A, MAP1LC3B, MAP1LC3C and THRA.</text>
</comment>
<comment type="subcellular location">
    <subcellularLocation>
        <location evidence="1">Cytoplasm</location>
        <location evidence="1">Cytosol</location>
    </subcellularLocation>
    <subcellularLocation>
        <location evidence="1">Nucleus</location>
    </subcellularLocation>
    <subcellularLocation>
        <location evidence="1">Nucleus</location>
        <location evidence="1">PML body</location>
    </subcellularLocation>
    <subcellularLocation>
        <location evidence="1">Cytoplasmic vesicle</location>
        <location evidence="1">Autophagosome</location>
    </subcellularLocation>
    <text evidence="1">Shuttles between the nucleus and the cytoplasm, depending on cellular stress conditions, and re-localizes to autophagosomes on autophagy activation.</text>
</comment>
<comment type="alternative products">
    <event type="alternative splicing"/>
    <isoform>
        <id>Q8CFU8-1</id>
        <name>1</name>
        <sequence type="displayed"/>
    </isoform>
    <isoform>
        <id>Q8CFU8-2</id>
        <name>2</name>
        <sequence type="described" ref="VSP_007752"/>
    </isoform>
</comment>
<comment type="domain">
    <text evidence="1">The LC3 interacting region (LIR) motif mediates interaction with GABARAP, GABARAPL1, GABARAPL2, MAP1LC3A, MAP1LC3B and MAP1LC3C.</text>
</comment>
<reference key="1">
    <citation type="journal article" date="2007" name="PLoS ONE">
        <title>Identification of a novel modulator of thyroid hormone receptor-mediated action.</title>
        <authorList>
            <person name="Baumgartner B.G."/>
            <person name="Orpinell M."/>
            <person name="Duran J."/>
            <person name="Ribas V."/>
            <person name="Burghardt H.E."/>
            <person name="Bach D."/>
            <person name="Villar A.V."/>
            <person name="Paz J.C."/>
            <person name="Gonzalez M."/>
            <person name="Camps M."/>
            <person name="Oriola J."/>
            <person name="Rivera F."/>
            <person name="Palacin M."/>
            <person name="Zorzano A."/>
        </authorList>
    </citation>
    <scope>NUCLEOTIDE SEQUENCE [MRNA] (ISOFORM 2)</scope>
    <scope>FUNCTION</scope>
    <source>
        <tissue>Muscle</tissue>
    </source>
</reference>
<reference key="2">
    <citation type="submission" date="2001-03" db="EMBL/GenBank/DDBJ databases">
        <title>A novel transcription factor in mouse.</title>
        <authorList>
            <person name="Burghardt H.E."/>
            <person name="Baumgartner B.G."/>
            <person name="Bach D."/>
            <person name="Pich S."/>
            <person name="Zorzano A."/>
        </authorList>
    </citation>
    <scope>NUCLEOTIDE SEQUENCE [GENOMIC DNA] (ISOFORM 1)</scope>
    <source>
        <strain>129/SvJ</strain>
    </source>
</reference>
<reference key="3">
    <citation type="journal article" date="2009" name="PLoS Biol.">
        <title>Lineage-specific biology revealed by a finished genome assembly of the mouse.</title>
        <authorList>
            <person name="Church D.M."/>
            <person name="Goodstadt L."/>
            <person name="Hillier L.W."/>
            <person name="Zody M.C."/>
            <person name="Goldstein S."/>
            <person name="She X."/>
            <person name="Bult C.J."/>
            <person name="Agarwala R."/>
            <person name="Cherry J.L."/>
            <person name="DiCuccio M."/>
            <person name="Hlavina W."/>
            <person name="Kapustin Y."/>
            <person name="Meric P."/>
            <person name="Maglott D."/>
            <person name="Birtle Z."/>
            <person name="Marques A.C."/>
            <person name="Graves T."/>
            <person name="Zhou S."/>
            <person name="Teague B."/>
            <person name="Potamousis K."/>
            <person name="Churas C."/>
            <person name="Place M."/>
            <person name="Herschleb J."/>
            <person name="Runnheim R."/>
            <person name="Forrest D."/>
            <person name="Amos-Landgraf J."/>
            <person name="Schwartz D.C."/>
            <person name="Cheng Z."/>
            <person name="Lindblad-Toh K."/>
            <person name="Eichler E.E."/>
            <person name="Ponting C.P."/>
        </authorList>
    </citation>
    <scope>NUCLEOTIDE SEQUENCE [LARGE SCALE GENOMIC DNA]</scope>
    <source>
        <strain>C57BL/6J</strain>
    </source>
</reference>
<reference key="4">
    <citation type="journal article" date="2005" name="Science">
        <title>The transcriptional landscape of the mammalian genome.</title>
        <authorList>
            <person name="Carninci P."/>
            <person name="Kasukawa T."/>
            <person name="Katayama S."/>
            <person name="Gough J."/>
            <person name="Frith M.C."/>
            <person name="Maeda N."/>
            <person name="Oyama R."/>
            <person name="Ravasi T."/>
            <person name="Lenhard B."/>
            <person name="Wells C."/>
            <person name="Kodzius R."/>
            <person name="Shimokawa K."/>
            <person name="Bajic V.B."/>
            <person name="Brenner S.E."/>
            <person name="Batalov S."/>
            <person name="Forrest A.R."/>
            <person name="Zavolan M."/>
            <person name="Davis M.J."/>
            <person name="Wilming L.G."/>
            <person name="Aidinis V."/>
            <person name="Allen J.E."/>
            <person name="Ambesi-Impiombato A."/>
            <person name="Apweiler R."/>
            <person name="Aturaliya R.N."/>
            <person name="Bailey T.L."/>
            <person name="Bansal M."/>
            <person name="Baxter L."/>
            <person name="Beisel K.W."/>
            <person name="Bersano T."/>
            <person name="Bono H."/>
            <person name="Chalk A.M."/>
            <person name="Chiu K.P."/>
            <person name="Choudhary V."/>
            <person name="Christoffels A."/>
            <person name="Clutterbuck D.R."/>
            <person name="Crowe M.L."/>
            <person name="Dalla E."/>
            <person name="Dalrymple B.P."/>
            <person name="de Bono B."/>
            <person name="Della Gatta G."/>
            <person name="di Bernardo D."/>
            <person name="Down T."/>
            <person name="Engstrom P."/>
            <person name="Fagiolini M."/>
            <person name="Faulkner G."/>
            <person name="Fletcher C.F."/>
            <person name="Fukushima T."/>
            <person name="Furuno M."/>
            <person name="Futaki S."/>
            <person name="Gariboldi M."/>
            <person name="Georgii-Hemming P."/>
            <person name="Gingeras T.R."/>
            <person name="Gojobori T."/>
            <person name="Green R.E."/>
            <person name="Gustincich S."/>
            <person name="Harbers M."/>
            <person name="Hayashi Y."/>
            <person name="Hensch T.K."/>
            <person name="Hirokawa N."/>
            <person name="Hill D."/>
            <person name="Huminiecki L."/>
            <person name="Iacono M."/>
            <person name="Ikeo K."/>
            <person name="Iwama A."/>
            <person name="Ishikawa T."/>
            <person name="Jakt M."/>
            <person name="Kanapin A."/>
            <person name="Katoh M."/>
            <person name="Kawasawa Y."/>
            <person name="Kelso J."/>
            <person name="Kitamura H."/>
            <person name="Kitano H."/>
            <person name="Kollias G."/>
            <person name="Krishnan S.P."/>
            <person name="Kruger A."/>
            <person name="Kummerfeld S.K."/>
            <person name="Kurochkin I.V."/>
            <person name="Lareau L.F."/>
            <person name="Lazarevic D."/>
            <person name="Lipovich L."/>
            <person name="Liu J."/>
            <person name="Liuni S."/>
            <person name="McWilliam S."/>
            <person name="Madan Babu M."/>
            <person name="Madera M."/>
            <person name="Marchionni L."/>
            <person name="Matsuda H."/>
            <person name="Matsuzawa S."/>
            <person name="Miki H."/>
            <person name="Mignone F."/>
            <person name="Miyake S."/>
            <person name="Morris K."/>
            <person name="Mottagui-Tabar S."/>
            <person name="Mulder N."/>
            <person name="Nakano N."/>
            <person name="Nakauchi H."/>
            <person name="Ng P."/>
            <person name="Nilsson R."/>
            <person name="Nishiguchi S."/>
            <person name="Nishikawa S."/>
            <person name="Nori F."/>
            <person name="Ohara O."/>
            <person name="Okazaki Y."/>
            <person name="Orlando V."/>
            <person name="Pang K.C."/>
            <person name="Pavan W.J."/>
            <person name="Pavesi G."/>
            <person name="Pesole G."/>
            <person name="Petrovsky N."/>
            <person name="Piazza S."/>
            <person name="Reed J."/>
            <person name="Reid J.F."/>
            <person name="Ring B.Z."/>
            <person name="Ringwald M."/>
            <person name="Rost B."/>
            <person name="Ruan Y."/>
            <person name="Salzberg S.L."/>
            <person name="Sandelin A."/>
            <person name="Schneider C."/>
            <person name="Schoenbach C."/>
            <person name="Sekiguchi K."/>
            <person name="Semple C.A."/>
            <person name="Seno S."/>
            <person name="Sessa L."/>
            <person name="Sheng Y."/>
            <person name="Shibata Y."/>
            <person name="Shimada H."/>
            <person name="Shimada K."/>
            <person name="Silva D."/>
            <person name="Sinclair B."/>
            <person name="Sperling S."/>
            <person name="Stupka E."/>
            <person name="Sugiura K."/>
            <person name="Sultana R."/>
            <person name="Takenaka Y."/>
            <person name="Taki K."/>
            <person name="Tammoja K."/>
            <person name="Tan S.L."/>
            <person name="Tang S."/>
            <person name="Taylor M.S."/>
            <person name="Tegner J."/>
            <person name="Teichmann S.A."/>
            <person name="Ueda H.R."/>
            <person name="van Nimwegen E."/>
            <person name="Verardo R."/>
            <person name="Wei C.L."/>
            <person name="Yagi K."/>
            <person name="Yamanishi H."/>
            <person name="Zabarovsky E."/>
            <person name="Zhu S."/>
            <person name="Zimmer A."/>
            <person name="Hide W."/>
            <person name="Bult C."/>
            <person name="Grimmond S.M."/>
            <person name="Teasdale R.D."/>
            <person name="Liu E.T."/>
            <person name="Brusic V."/>
            <person name="Quackenbush J."/>
            <person name="Wahlestedt C."/>
            <person name="Mattick J.S."/>
            <person name="Hume D.A."/>
            <person name="Kai C."/>
            <person name="Sasaki D."/>
            <person name="Tomaru Y."/>
            <person name="Fukuda S."/>
            <person name="Kanamori-Katayama M."/>
            <person name="Suzuki M."/>
            <person name="Aoki J."/>
            <person name="Arakawa T."/>
            <person name="Iida J."/>
            <person name="Imamura K."/>
            <person name="Itoh M."/>
            <person name="Kato T."/>
            <person name="Kawaji H."/>
            <person name="Kawagashira N."/>
            <person name="Kawashima T."/>
            <person name="Kojima M."/>
            <person name="Kondo S."/>
            <person name="Konno H."/>
            <person name="Nakano K."/>
            <person name="Ninomiya N."/>
            <person name="Nishio T."/>
            <person name="Okada M."/>
            <person name="Plessy C."/>
            <person name="Shibata K."/>
            <person name="Shiraki T."/>
            <person name="Suzuki S."/>
            <person name="Tagami M."/>
            <person name="Waki K."/>
            <person name="Watahiki A."/>
            <person name="Okamura-Oho Y."/>
            <person name="Suzuki H."/>
            <person name="Kawai J."/>
            <person name="Hayashizaki Y."/>
        </authorList>
    </citation>
    <scope>NUCLEOTIDE SEQUENCE [LARGE SCALE MRNA] (ISOFORM 1)</scope>
    <source>
        <strain>C57BL/6J</strain>
        <strain>NOD</strain>
        <tissue>Dendritic cell</tissue>
        <tissue>Embryonic heart</tissue>
    </source>
</reference>
<reference key="5">
    <citation type="journal article" date="2004" name="Genome Res.">
        <title>The status, quality, and expansion of the NIH full-length cDNA project: the Mammalian Gene Collection (MGC).</title>
        <authorList>
            <consortium name="The MGC Project Team"/>
        </authorList>
    </citation>
    <scope>NUCLEOTIDE SEQUENCE [LARGE SCALE MRNA] (ISOFORM 1)</scope>
    <source>
        <strain>C57BL/6J</strain>
        <tissue>Brain</tissue>
        <tissue>Retina</tissue>
    </source>
</reference>
<sequence>MFQRFTSLFFNTPAPPEDSNCPGAFVSEEDEVDGWLIIDLQDSYTAPPDPGASPAPAGRPPPAPSLMDESWFVTPPACFTAEGPGLGPARLQSNPLEDLLIEHPSMSVYVTGSTIVLESGPPSPHPEAALPDQDLSDGELAPALREPRALHHAAAPMPARAVLLEKAGQVRRLQRARQRAERHTLSAKVLQRQNRARESRSRRPKHQGSFIYQPCQRQFNY</sequence>
<organism>
    <name type="scientific">Mus musculus</name>
    <name type="common">Mouse</name>
    <dbReference type="NCBI Taxonomy" id="10090"/>
    <lineage>
        <taxon>Eukaryota</taxon>
        <taxon>Metazoa</taxon>
        <taxon>Chordata</taxon>
        <taxon>Craniata</taxon>
        <taxon>Vertebrata</taxon>
        <taxon>Euteleostomi</taxon>
        <taxon>Mammalia</taxon>
        <taxon>Eutheria</taxon>
        <taxon>Euarchontoglires</taxon>
        <taxon>Glires</taxon>
        <taxon>Rodentia</taxon>
        <taxon>Myomorpha</taxon>
        <taxon>Muroidea</taxon>
        <taxon>Muridae</taxon>
        <taxon>Murinae</taxon>
        <taxon>Mus</taxon>
        <taxon>Mus</taxon>
    </lineage>
</organism>
<accession>Q8CFU8</accession>
<accession>Q3TDL6</accession>
<accession>Q711P5</accession>
<accession>Q8CHM4</accession>
<feature type="chain" id="PRO_0000072410" description="Tumor protein p53-inducible nuclear protein 2">
    <location>
        <begin position="1"/>
        <end position="221"/>
    </location>
</feature>
<feature type="region of interest" description="Disordered" evidence="3">
    <location>
        <begin position="41"/>
        <end position="68"/>
    </location>
</feature>
<feature type="region of interest" description="Disordered" evidence="3">
    <location>
        <begin position="177"/>
        <end position="210"/>
    </location>
</feature>
<feature type="short sequence motif" description="LIR">
    <location>
        <begin position="26"/>
        <end position="41"/>
    </location>
</feature>
<feature type="compositionally biased region" description="Pro residues" evidence="3">
    <location>
        <begin position="47"/>
        <end position="64"/>
    </location>
</feature>
<feature type="modified residue" description="Phosphoserine" evidence="2">
    <location>
        <position position="136"/>
    </location>
</feature>
<feature type="splice variant" id="VSP_007752" description="In isoform 2." evidence="5">
    <location>
        <begin position="22"/>
        <end position="49"/>
    </location>
</feature>
<feature type="sequence conflict" description="In Ref. 2; CAC84145." evidence="6" ref="2">
    <original>D</original>
    <variation>G</variation>
    <location>
        <position position="42"/>
    </location>
</feature>
<feature type="sequence conflict" description="In Ref. 1; CAC82594 and 2; CAC84145." evidence="6" ref="1 2">
    <original>P</original>
    <variation>S</variation>
    <location>
        <position position="60"/>
    </location>
</feature>